<dbReference type="EC" id="2.7.10.1"/>
<dbReference type="EMBL" id="AF012437">
    <property type="protein sequence ID" value="AAC47715.1"/>
    <property type="molecule type" value="mRNA"/>
</dbReference>
<dbReference type="EMBL" id="BX284603">
    <property type="protein sequence ID" value="CCD72201.2"/>
    <property type="molecule type" value="Genomic_DNA"/>
</dbReference>
<dbReference type="EMBL" id="BX284603">
    <property type="protein sequence ID" value="CTQ86616.1"/>
    <property type="molecule type" value="Genomic_DNA"/>
</dbReference>
<dbReference type="PIR" id="T42047">
    <property type="entry name" value="T42047"/>
</dbReference>
<dbReference type="RefSeq" id="NP_001299916.1">
    <molecule id="Q968Y9-3"/>
    <property type="nucleotide sequence ID" value="NM_001312987.4"/>
</dbReference>
<dbReference type="RefSeq" id="NP_497650.4">
    <molecule id="Q968Y9-1"/>
    <property type="nucleotide sequence ID" value="NM_065249.4"/>
</dbReference>
<dbReference type="SMR" id="Q968Y9"/>
<dbReference type="BioGRID" id="40655">
    <property type="interactions" value="170"/>
</dbReference>
<dbReference type="FunCoup" id="Q968Y9">
    <property type="interactions" value="1208"/>
</dbReference>
<dbReference type="STRING" id="6239.Y55D5A.5c.2"/>
<dbReference type="TCDB" id="8.A.23.1.30">
    <property type="family name" value="the basigin (basigin) family"/>
</dbReference>
<dbReference type="GlyCosmos" id="Q968Y9">
    <property type="glycosylation" value="13 sites, No reported glycans"/>
</dbReference>
<dbReference type="iPTMnet" id="Q968Y9"/>
<dbReference type="PaxDb" id="6239-Y55D5A.5a"/>
<dbReference type="PeptideAtlas" id="Q968Y9"/>
<dbReference type="EnsemblMetazoa" id="Y55D5A.5a.1">
    <molecule id="Q968Y9-1"/>
    <property type="protein sequence ID" value="Y55D5A.5a.1"/>
    <property type="gene ID" value="WBGene00000898"/>
</dbReference>
<dbReference type="EnsemblMetazoa" id="Y55D5A.5c.1">
    <molecule id="Q968Y9-3"/>
    <property type="protein sequence ID" value="Y55D5A.5c.1"/>
    <property type="gene ID" value="WBGene00000898"/>
</dbReference>
<dbReference type="GeneID" id="175410"/>
<dbReference type="KEGG" id="cel:CELE_Y55D5A.5"/>
<dbReference type="AGR" id="WB:WBGene00000898"/>
<dbReference type="CTD" id="175410"/>
<dbReference type="WormBase" id="Y55D5A.5a">
    <molecule id="Q968Y9-1"/>
    <property type="protein sequence ID" value="CE46852"/>
    <property type="gene ID" value="WBGene00000898"/>
    <property type="gene designation" value="daf-2"/>
</dbReference>
<dbReference type="WormBase" id="Y55D5A.5c">
    <molecule id="Q968Y9-3"/>
    <property type="protein sequence ID" value="CE50204"/>
    <property type="gene ID" value="WBGene00000898"/>
    <property type="gene designation" value="daf-2"/>
</dbReference>
<dbReference type="eggNOG" id="KOG4258">
    <property type="taxonomic scope" value="Eukaryota"/>
</dbReference>
<dbReference type="GeneTree" id="ENSGT00940000170078"/>
<dbReference type="HOGENOM" id="CLU_000288_166_3_1"/>
<dbReference type="InParanoid" id="Q968Y9"/>
<dbReference type="OMA" id="HWGNETA"/>
<dbReference type="OrthoDB" id="546826at2759"/>
<dbReference type="PhylomeDB" id="Q968Y9"/>
<dbReference type="Reactome" id="R-CEL-77387">
    <property type="pathway name" value="Insulin receptor recycling"/>
</dbReference>
<dbReference type="SignaLink" id="Q968Y9"/>
<dbReference type="PRO" id="PR:Q968Y9"/>
<dbReference type="Proteomes" id="UP000001940">
    <property type="component" value="Chromosome III"/>
</dbReference>
<dbReference type="Bgee" id="WBGene00000898">
    <property type="expression patterns" value="Expressed in embryo and 4 other cell types or tissues"/>
</dbReference>
<dbReference type="ExpressionAtlas" id="Q968Y9">
    <property type="expression patterns" value="baseline"/>
</dbReference>
<dbReference type="GO" id="GO:0030424">
    <property type="term" value="C:axon"/>
    <property type="evidence" value="ECO:0000314"/>
    <property type="project" value="WormBase"/>
</dbReference>
<dbReference type="GO" id="GO:0005737">
    <property type="term" value="C:cytoplasm"/>
    <property type="evidence" value="ECO:0000314"/>
    <property type="project" value="WormBase"/>
</dbReference>
<dbReference type="GO" id="GO:0031410">
    <property type="term" value="C:cytoplasmic vesicle"/>
    <property type="evidence" value="ECO:0000314"/>
    <property type="project" value="WormBase"/>
</dbReference>
<dbReference type="GO" id="GO:0005899">
    <property type="term" value="C:insulin receptor complex"/>
    <property type="evidence" value="ECO:0000318"/>
    <property type="project" value="GO_Central"/>
</dbReference>
<dbReference type="GO" id="GO:0043025">
    <property type="term" value="C:neuronal cell body"/>
    <property type="evidence" value="ECO:0000314"/>
    <property type="project" value="WormBase"/>
</dbReference>
<dbReference type="GO" id="GO:0097730">
    <property type="term" value="C:non-motile cilium"/>
    <property type="evidence" value="ECO:0000314"/>
    <property type="project" value="WormBase"/>
</dbReference>
<dbReference type="GO" id="GO:0005886">
    <property type="term" value="C:plasma membrane"/>
    <property type="evidence" value="ECO:0000314"/>
    <property type="project" value="WormBase"/>
</dbReference>
<dbReference type="GO" id="GO:0005524">
    <property type="term" value="F:ATP binding"/>
    <property type="evidence" value="ECO:0000250"/>
    <property type="project" value="WormBase"/>
</dbReference>
<dbReference type="GO" id="GO:0005009">
    <property type="term" value="F:insulin receptor activity"/>
    <property type="evidence" value="ECO:0000250"/>
    <property type="project" value="WormBase"/>
</dbReference>
<dbReference type="GO" id="GO:0043560">
    <property type="term" value="F:insulin receptor substrate binding"/>
    <property type="evidence" value="ECO:0000318"/>
    <property type="project" value="GO_Central"/>
</dbReference>
<dbReference type="GO" id="GO:0046872">
    <property type="term" value="F:metal ion binding"/>
    <property type="evidence" value="ECO:0007669"/>
    <property type="project" value="UniProtKB-KW"/>
</dbReference>
<dbReference type="GO" id="GO:0017046">
    <property type="term" value="F:peptide hormone binding"/>
    <property type="evidence" value="ECO:0000250"/>
    <property type="project" value="WormBase"/>
</dbReference>
<dbReference type="GO" id="GO:0019901">
    <property type="term" value="F:protein kinase binding"/>
    <property type="evidence" value="ECO:0000353"/>
    <property type="project" value="WormBase"/>
</dbReference>
<dbReference type="GO" id="GO:0051425">
    <property type="term" value="F:PTB domain binding"/>
    <property type="evidence" value="ECO:0000353"/>
    <property type="project" value="WormBase"/>
</dbReference>
<dbReference type="GO" id="GO:0042169">
    <property type="term" value="F:SH2 domain binding"/>
    <property type="evidence" value="ECO:0000353"/>
    <property type="project" value="WormBase"/>
</dbReference>
<dbReference type="GO" id="GO:0007155">
    <property type="term" value="P:cell adhesion"/>
    <property type="evidence" value="ECO:0007669"/>
    <property type="project" value="UniProtKB-KW"/>
</dbReference>
<dbReference type="GO" id="GO:1902075">
    <property type="term" value="P:cellular response to salt"/>
    <property type="evidence" value="ECO:0000315"/>
    <property type="project" value="UniProtKB"/>
</dbReference>
<dbReference type="GO" id="GO:0043054">
    <property type="term" value="P:dauer exit"/>
    <property type="evidence" value="ECO:0000315"/>
    <property type="project" value="WormBase"/>
</dbReference>
<dbReference type="GO" id="GO:0040024">
    <property type="term" value="P:dauer larval development"/>
    <property type="evidence" value="ECO:0000315"/>
    <property type="project" value="UniProtKB"/>
</dbReference>
<dbReference type="GO" id="GO:0050829">
    <property type="term" value="P:defense response to Gram-negative bacterium"/>
    <property type="evidence" value="ECO:0000316"/>
    <property type="project" value="UniProtKB"/>
</dbReference>
<dbReference type="GO" id="GO:0008340">
    <property type="term" value="P:determination of adult lifespan"/>
    <property type="evidence" value="ECO:0000315"/>
    <property type="project" value="UniProtKB"/>
</dbReference>
<dbReference type="GO" id="GO:0042593">
    <property type="term" value="P:glucose homeostasis"/>
    <property type="evidence" value="ECO:0000318"/>
    <property type="project" value="GO_Central"/>
</dbReference>
<dbReference type="GO" id="GO:0010286">
    <property type="term" value="P:heat acclimation"/>
    <property type="evidence" value="ECO:0000315"/>
    <property type="project" value="UniProtKB"/>
</dbReference>
<dbReference type="GO" id="GO:0045087">
    <property type="term" value="P:innate immune response"/>
    <property type="evidence" value="ECO:0007669"/>
    <property type="project" value="UniProtKB-KW"/>
</dbReference>
<dbReference type="GO" id="GO:0008286">
    <property type="term" value="P:insulin receptor signaling pathway"/>
    <property type="evidence" value="ECO:0000250"/>
    <property type="project" value="WormBase"/>
</dbReference>
<dbReference type="GO" id="GO:0030536">
    <property type="term" value="P:larval feeding behavior"/>
    <property type="evidence" value="ECO:0000315"/>
    <property type="project" value="UniProtKB"/>
</dbReference>
<dbReference type="GO" id="GO:1905910">
    <property type="term" value="P:negative regulation of dauer entry"/>
    <property type="evidence" value="ECO:0000315"/>
    <property type="project" value="UniProtKB"/>
</dbReference>
<dbReference type="GO" id="GO:0010629">
    <property type="term" value="P:negative regulation of gene expression"/>
    <property type="evidence" value="ECO:0000315"/>
    <property type="project" value="UniProtKB"/>
</dbReference>
<dbReference type="GO" id="GO:0010888">
    <property type="term" value="P:negative regulation of lipid storage"/>
    <property type="evidence" value="ECO:0000315"/>
    <property type="project" value="UniProtKB"/>
</dbReference>
<dbReference type="GO" id="GO:0032435">
    <property type="term" value="P:negative regulation of proteasomal ubiquitin-dependent protein catabolic process"/>
    <property type="evidence" value="ECO:0000315"/>
    <property type="project" value="UniProtKB"/>
</dbReference>
<dbReference type="GO" id="GO:1900181">
    <property type="term" value="P:negative regulation of protein localization to nucleus"/>
    <property type="evidence" value="ECO:0000315"/>
    <property type="project" value="UniProtKB"/>
</dbReference>
<dbReference type="GO" id="GO:0010628">
    <property type="term" value="P:positive regulation of gene expression"/>
    <property type="evidence" value="ECO:0000315"/>
    <property type="project" value="UniProtKB"/>
</dbReference>
<dbReference type="GO" id="GO:0043410">
    <property type="term" value="P:positive regulation of MAPK cascade"/>
    <property type="evidence" value="ECO:0000318"/>
    <property type="project" value="GO_Central"/>
</dbReference>
<dbReference type="GO" id="GO:0040018">
    <property type="term" value="P:positive regulation of multicellular organism growth"/>
    <property type="evidence" value="ECO:0000315"/>
    <property type="project" value="WormBase"/>
</dbReference>
<dbReference type="GO" id="GO:1900075">
    <property type="term" value="P:positive regulation of neuromuscular synaptic transmission"/>
    <property type="evidence" value="ECO:0000316"/>
    <property type="project" value="UniProtKB"/>
</dbReference>
<dbReference type="GO" id="GO:0051897">
    <property type="term" value="P:positive regulation of phosphatidylinositol 3-kinase/protein kinase B signal transduction"/>
    <property type="evidence" value="ECO:0000318"/>
    <property type="project" value="GO_Central"/>
</dbReference>
<dbReference type="GO" id="GO:0045887">
    <property type="term" value="P:positive regulation of synaptic assembly at neuromuscular junction"/>
    <property type="evidence" value="ECO:0000316"/>
    <property type="project" value="UniProtKB"/>
</dbReference>
<dbReference type="GO" id="GO:0045944">
    <property type="term" value="P:positive regulation of transcription by RNA polymerase II"/>
    <property type="evidence" value="ECO:0000315"/>
    <property type="project" value="UniProtKB"/>
</dbReference>
<dbReference type="GO" id="GO:0006606">
    <property type="term" value="P:protein import into nucleus"/>
    <property type="evidence" value="ECO:0000315"/>
    <property type="project" value="WormBase"/>
</dbReference>
<dbReference type="GO" id="GO:2000785">
    <property type="term" value="P:regulation of autophagosome assembly"/>
    <property type="evidence" value="ECO:0000315"/>
    <property type="project" value="BHF-UCL"/>
</dbReference>
<dbReference type="GO" id="GO:1905909">
    <property type="term" value="P:regulation of dauer entry"/>
    <property type="evidence" value="ECO:0000316"/>
    <property type="project" value="UniProtKB"/>
</dbReference>
<dbReference type="GO" id="GO:0061065">
    <property type="term" value="P:regulation of dauer larval development"/>
    <property type="evidence" value="ECO:0000315"/>
    <property type="project" value="UniProtKB"/>
</dbReference>
<dbReference type="GO" id="GO:0040034">
    <property type="term" value="P:regulation of development, heterochronic"/>
    <property type="evidence" value="ECO:0000316"/>
    <property type="project" value="WormBase"/>
</dbReference>
<dbReference type="GO" id="GO:1903998">
    <property type="term" value="P:regulation of eating behavior"/>
    <property type="evidence" value="ECO:0000315"/>
    <property type="project" value="UniProtKB"/>
</dbReference>
<dbReference type="GO" id="GO:0010468">
    <property type="term" value="P:regulation of gene expression"/>
    <property type="evidence" value="ECO:0000316"/>
    <property type="project" value="UniProtKB"/>
</dbReference>
<dbReference type="GO" id="GO:0010883">
    <property type="term" value="P:regulation of lipid storage"/>
    <property type="evidence" value="ECO:0000316"/>
    <property type="project" value="UniProtKB"/>
</dbReference>
<dbReference type="GO" id="GO:1901031">
    <property type="term" value="P:regulation of response to reactive oxygen species"/>
    <property type="evidence" value="ECO:0000315"/>
    <property type="project" value="WormBase"/>
</dbReference>
<dbReference type="GO" id="GO:0022414">
    <property type="term" value="P:reproductive process"/>
    <property type="evidence" value="ECO:0000315"/>
    <property type="project" value="WormBase"/>
</dbReference>
<dbReference type="GO" id="GO:0006979">
    <property type="term" value="P:response to oxidative stress"/>
    <property type="evidence" value="ECO:0000315"/>
    <property type="project" value="UniProtKB"/>
</dbReference>
<dbReference type="GO" id="GO:0009411">
    <property type="term" value="P:response to UV"/>
    <property type="evidence" value="ECO:0000315"/>
    <property type="project" value="UniProtKB"/>
</dbReference>
<dbReference type="CDD" id="cd00063">
    <property type="entry name" value="FN3"/>
    <property type="match status" value="2"/>
</dbReference>
<dbReference type="CDD" id="cd05032">
    <property type="entry name" value="PTKc_InsR_like"/>
    <property type="match status" value="1"/>
</dbReference>
<dbReference type="FunFam" id="1.10.510.10:FF:000987">
    <property type="entry name" value="Receptor protein-tyrosine kinase"/>
    <property type="match status" value="1"/>
</dbReference>
<dbReference type="FunFam" id="2.10.220.10:FF:000078">
    <property type="entry name" value="Receptor protein-tyrosine kinase"/>
    <property type="match status" value="1"/>
</dbReference>
<dbReference type="FunFam" id="2.60.40.10:FF:003067">
    <property type="entry name" value="Receptor protein-tyrosine kinase"/>
    <property type="match status" value="1"/>
</dbReference>
<dbReference type="FunFam" id="3.30.200.20:FF:000940">
    <property type="entry name" value="Receptor protein-tyrosine kinase"/>
    <property type="match status" value="1"/>
</dbReference>
<dbReference type="FunFam" id="3.80.20.20:FF:000026">
    <property type="entry name" value="Receptor protein-tyrosine kinase"/>
    <property type="match status" value="1"/>
</dbReference>
<dbReference type="FunFam" id="3.80.20.20:FF:000027">
    <property type="entry name" value="Receptor protein-tyrosine kinase"/>
    <property type="match status" value="1"/>
</dbReference>
<dbReference type="Gene3D" id="2.10.220.10">
    <property type="entry name" value="Hormone Receptor, Insulin-like Growth Factor Receptor 1, Chain A, domain 2"/>
    <property type="match status" value="1"/>
</dbReference>
<dbReference type="Gene3D" id="2.60.40.10">
    <property type="entry name" value="Immunoglobulins"/>
    <property type="match status" value="3"/>
</dbReference>
<dbReference type="Gene3D" id="3.30.200.20">
    <property type="entry name" value="Phosphorylase Kinase, domain 1"/>
    <property type="match status" value="1"/>
</dbReference>
<dbReference type="Gene3D" id="3.80.20.20">
    <property type="entry name" value="Receptor L-domain"/>
    <property type="match status" value="2"/>
</dbReference>
<dbReference type="Gene3D" id="1.10.510.10">
    <property type="entry name" value="Transferase(Phosphotransferase) domain 1"/>
    <property type="match status" value="1"/>
</dbReference>
<dbReference type="InterPro" id="IPR003961">
    <property type="entry name" value="FN3_dom"/>
</dbReference>
<dbReference type="InterPro" id="IPR036116">
    <property type="entry name" value="FN3_sf"/>
</dbReference>
<dbReference type="InterPro" id="IPR006211">
    <property type="entry name" value="Furin-like_Cys-rich_dom"/>
</dbReference>
<dbReference type="InterPro" id="IPR009030">
    <property type="entry name" value="Growth_fac_rcpt_cys_sf"/>
</dbReference>
<dbReference type="InterPro" id="IPR013783">
    <property type="entry name" value="Ig-like_fold"/>
</dbReference>
<dbReference type="InterPro" id="IPR011009">
    <property type="entry name" value="Kinase-like_dom_sf"/>
</dbReference>
<dbReference type="InterPro" id="IPR000719">
    <property type="entry name" value="Prot_kinase_dom"/>
</dbReference>
<dbReference type="InterPro" id="IPR000494">
    <property type="entry name" value="Rcpt_L-dom"/>
</dbReference>
<dbReference type="InterPro" id="IPR036941">
    <property type="entry name" value="Rcpt_L-dom_sf"/>
</dbReference>
<dbReference type="InterPro" id="IPR050122">
    <property type="entry name" value="RTK"/>
</dbReference>
<dbReference type="InterPro" id="IPR001245">
    <property type="entry name" value="Ser-Thr/Tyr_kinase_cat_dom"/>
</dbReference>
<dbReference type="InterPro" id="IPR008266">
    <property type="entry name" value="Tyr_kinase_AS"/>
</dbReference>
<dbReference type="InterPro" id="IPR020635">
    <property type="entry name" value="Tyr_kinase_cat_dom"/>
</dbReference>
<dbReference type="PANTHER" id="PTHR24416:SF525">
    <property type="entry name" value="INSULIN-LIKE RECEPTOR"/>
    <property type="match status" value="1"/>
</dbReference>
<dbReference type="PANTHER" id="PTHR24416">
    <property type="entry name" value="TYROSINE-PROTEIN KINASE RECEPTOR"/>
    <property type="match status" value="1"/>
</dbReference>
<dbReference type="Pfam" id="PF00757">
    <property type="entry name" value="Furin-like"/>
    <property type="match status" value="1"/>
</dbReference>
<dbReference type="Pfam" id="PF07714">
    <property type="entry name" value="PK_Tyr_Ser-Thr"/>
    <property type="match status" value="1"/>
</dbReference>
<dbReference type="Pfam" id="PF01030">
    <property type="entry name" value="Recep_L_domain"/>
    <property type="match status" value="2"/>
</dbReference>
<dbReference type="PRINTS" id="PR00109">
    <property type="entry name" value="TYRKINASE"/>
</dbReference>
<dbReference type="SMART" id="SM00060">
    <property type="entry name" value="FN3"/>
    <property type="match status" value="2"/>
</dbReference>
<dbReference type="SMART" id="SM00219">
    <property type="entry name" value="TyrKc"/>
    <property type="match status" value="1"/>
</dbReference>
<dbReference type="SUPFAM" id="SSF49265">
    <property type="entry name" value="Fibronectin type III"/>
    <property type="match status" value="2"/>
</dbReference>
<dbReference type="SUPFAM" id="SSF57184">
    <property type="entry name" value="Growth factor receptor domain"/>
    <property type="match status" value="1"/>
</dbReference>
<dbReference type="SUPFAM" id="SSF52058">
    <property type="entry name" value="L domain-like"/>
    <property type="match status" value="2"/>
</dbReference>
<dbReference type="SUPFAM" id="SSF56112">
    <property type="entry name" value="Protein kinase-like (PK-like)"/>
    <property type="match status" value="1"/>
</dbReference>
<dbReference type="PROSITE" id="PS50853">
    <property type="entry name" value="FN3"/>
    <property type="match status" value="3"/>
</dbReference>
<dbReference type="PROSITE" id="PS50011">
    <property type="entry name" value="PROTEIN_KINASE_DOM"/>
    <property type="match status" value="1"/>
</dbReference>
<dbReference type="PROSITE" id="PS00109">
    <property type="entry name" value="PROTEIN_KINASE_TYR"/>
    <property type="match status" value="1"/>
</dbReference>
<keyword id="KW-0025">Alternative splicing</keyword>
<keyword id="KW-0067">ATP-binding</keyword>
<keyword id="KW-0106">Calcium</keyword>
<keyword id="KW-0119">Carbohydrate metabolism</keyword>
<keyword id="KW-0130">Cell adhesion</keyword>
<keyword id="KW-0966">Cell projection</keyword>
<keyword id="KW-0165">Cleavage on pair of basic residues</keyword>
<keyword id="KW-0217">Developmental protein</keyword>
<keyword id="KW-1015">Disulfide bond</keyword>
<keyword id="KW-0325">Glycoprotein</keyword>
<keyword id="KW-0391">Immunity</keyword>
<keyword id="KW-0399">Innate immunity</keyword>
<keyword id="KW-0418">Kinase</keyword>
<keyword id="KW-0464">Manganese</keyword>
<keyword id="KW-0472">Membrane</keyword>
<keyword id="KW-0479">Metal-binding</keyword>
<keyword id="KW-0547">Nucleotide-binding</keyword>
<keyword id="KW-0597">Phosphoprotein</keyword>
<keyword id="KW-0675">Receptor</keyword>
<keyword id="KW-1185">Reference proteome</keyword>
<keyword id="KW-0677">Repeat</keyword>
<keyword id="KW-0732">Signal</keyword>
<keyword id="KW-0808">Transferase</keyword>
<keyword id="KW-0812">Transmembrane</keyword>
<keyword id="KW-1133">Transmembrane helix</keyword>
<keyword id="KW-0829">Tyrosine-protein kinase</keyword>
<proteinExistence type="evidence at protein level"/>
<reference evidence="31 32" key="1">
    <citation type="journal article" date="1997" name="Science">
        <title>daf-2, an insulin receptor-like gene that regulates longevity and diapause in Caenorhabditis elegans.</title>
        <authorList>
            <person name="Kimura K.D."/>
            <person name="Tissenbaum H.A."/>
            <person name="Liu Y."/>
            <person name="Ruvkun G."/>
        </authorList>
    </citation>
    <scope>NUCLEOTIDE SEQUENCE [MRNA]</scope>
    <scope>FUNCTION</scope>
    <scope>DISRUPTION PHENOTYPE</scope>
    <scope>MUTAGENESIS OF CYS-401; CYS-469; PRO-470; SER-573; ASP-648; ASP-1374; PRO-1434 AND PRO-1465</scope>
    <source>
        <strain evidence="32">Bristol N2</strain>
    </source>
</reference>
<reference evidence="31" key="2">
    <citation type="journal article" date="1998" name="Science">
        <title>Genome sequence of the nematode C. elegans: a platform for investigating biology.</title>
        <authorList>
            <consortium name="The C. elegans sequencing consortium"/>
        </authorList>
    </citation>
    <scope>NUCLEOTIDE SEQUENCE [LARGE SCALE GENOMIC DNA]</scope>
    <source>
        <strain>Bristol N2</strain>
    </source>
</reference>
<reference evidence="31" key="3">
    <citation type="journal article" date="1998" name="Cell">
        <title>Cell nonautonomy of C. elegans daf-2 function in the regulation of diapause and life span.</title>
        <authorList>
            <person name="Apfeld J."/>
            <person name="Kenyon C."/>
        </authorList>
    </citation>
    <scope>FUNCTION</scope>
    <scope>DISRUPTION PHENOTYPE</scope>
    <scope>MUTAGENESIS OF PRO-1465</scope>
</reference>
<reference evidence="31" key="4">
    <citation type="journal article" date="2001" name="Genes Dev.">
        <title>Regulation of DAF-2 receptor signaling by human insulin and ins-1, a member of the unusually large and diverse C. elegans insulin gene family.</title>
        <authorList>
            <person name="Pierce S.B."/>
            <person name="Costa M."/>
            <person name="Wisotzkey R."/>
            <person name="Devadhar S."/>
            <person name="Homburger S.A."/>
            <person name="Buchman A.R."/>
            <person name="Ferguson K.C."/>
            <person name="Heller J."/>
            <person name="Platt D.M."/>
            <person name="Pasquinelli A.A."/>
            <person name="Liu L.X."/>
            <person name="Doberstein S.K."/>
            <person name="Ruvkun G."/>
        </authorList>
    </citation>
    <scope>FUNCTION</scope>
    <scope>DISRUPTION PHENOTYPE</scope>
    <scope>MUTAGENESIS OF ALA-580 AND PRO-1465</scope>
</reference>
<reference key="5">
    <citation type="journal article" date="2001" name="J. Mol. Biol.">
        <title>DAF-16-dependent and independent expression targets of DAF-2 insulin receptor-like pathway in Caenorhabditis elegans include FKBPs.</title>
        <authorList>
            <person name="Yu H."/>
            <person name="Larsen P.L."/>
        </authorList>
    </citation>
    <scope>FUNCTION</scope>
    <scope>MUTAGENESIS OF GLY-383</scope>
</reference>
<reference key="6">
    <citation type="journal article" date="2006" name="Neuron">
        <title>The insulin/PI 3-kinase pathway regulates salt chemotaxis learning in Caenorhabditis elegans.</title>
        <authorList>
            <person name="Tomioka M."/>
            <person name="Adachi T."/>
            <person name="Suzuki H."/>
            <person name="Kunitomo H."/>
            <person name="Schafer W.R."/>
            <person name="Iino Y."/>
        </authorList>
    </citation>
    <scope>MUTAGENESIS OF GLY-383; ASP-1374 AND PRO-1465</scope>
</reference>
<reference key="7">
    <citation type="journal article" date="2007" name="Mol. Cell. Proteomics">
        <title>Proteomics reveals N-linked glycoprotein diversity in Caenorhabditis elegans and suggests an atypical translocation mechanism for integral membrane proteins.</title>
        <authorList>
            <person name="Kaji H."/>
            <person name="Kamiie J."/>
            <person name="Kawakami H."/>
            <person name="Kido K."/>
            <person name="Yamauchi Y."/>
            <person name="Shinkawa T."/>
            <person name="Taoka M."/>
            <person name="Takahashi N."/>
            <person name="Isobe T."/>
        </authorList>
    </citation>
    <scope>GLYCOSYLATION [LARGE SCALE ANALYSIS] AT ASN-364; ASN-453; ASN-696; ASN-1017 AND ASN-1078</scope>
    <scope>IDENTIFICATION BY MASS SPECTROMETRY</scope>
    <source>
        <strain>Bristol N2</strain>
    </source>
</reference>
<reference key="8">
    <citation type="journal article" date="2008" name="Aging Cell">
        <title>The DAF-2 insulin-like signaling pathway independently regulates aging and immunity in C. elegans.</title>
        <authorList>
            <person name="Evans E.A."/>
            <person name="Chen W.C."/>
            <person name="Tan M.-W."/>
        </authorList>
    </citation>
    <scope>FUNCTION</scope>
    <scope>DISRUPTION PHENOTYPE</scope>
    <scope>MUTAGENESIS OF PRO-1465</scope>
</reference>
<reference key="9">
    <citation type="journal article" date="2008" name="Dev. Biol.">
        <title>Insulin-like signaling negatively regulates muscle arm extension through DAF-12 in Caenorhabditis elegans.</title>
        <authorList>
            <person name="Dixon S.J."/>
            <person name="Alexander M."/>
            <person name="Chan K.K."/>
            <person name="Roy P.J."/>
        </authorList>
    </citation>
    <scope>DISRUPTION PHENOTYPE</scope>
    <scope>MUTAGENESIS OF GLY-383; GLY-547; CYS-1045; PRO-1434 AND PRO-1465</scope>
</reference>
<reference key="10">
    <citation type="journal article" date="2008" name="Genes Dev.">
        <title>SHC-1/p52Shc targets the insulin/IGF-1 and JNK signaling pathways to modulate life span and stress response in C. elegans.</title>
        <authorList>
            <person name="Neumann-Haefelin E."/>
            <person name="Qi W."/>
            <person name="Finkbeiner E."/>
            <person name="Walz G."/>
            <person name="Baumeister R."/>
            <person name="Hertweck M."/>
        </authorList>
    </citation>
    <scope>ACTIVITY REGULATION</scope>
    <scope>INTERACTION WITH SHC-1</scope>
</reference>
<reference key="11">
    <citation type="journal article" date="2008" name="Genetics">
        <title>Clustering of genetically defined allele classes in the Caenorhabditis elegans DAF-2 insulin/IGF-1 receptor.</title>
        <authorList>
            <person name="Patel D.S."/>
            <person name="Garza-Garcia A."/>
            <person name="Nanji M."/>
            <person name="McElwee J.J."/>
            <person name="Ackerman D."/>
            <person name="Driscoll P.C."/>
            <person name="Gems D."/>
        </authorList>
    </citation>
    <scope>DISRUPTION PHENOTYPE</scope>
    <scope>MUTAGENESIS OF CYS-146 AND PRO-1465</scope>
</reference>
<reference key="12">
    <citation type="journal article" date="2011" name="Biochem. Biophys. Res. Commun.">
        <title>The thioredoxin TRX-1 regulates adult lifespan extension induced by dietary restriction in Caenorhabditis elegans.</title>
        <authorList>
            <person name="Fierro-Gonzalez J.C."/>
            <person name="Gonzalez-Barrios M."/>
            <person name="Miranda-Vizuete A."/>
            <person name="Swoboda P."/>
        </authorList>
    </citation>
    <scope>FUNCTION</scope>
    <scope>MUTAGENESIS OF PRO-1465</scope>
</reference>
<reference key="13">
    <citation type="journal article" date="2011" name="Development">
        <title>The zinc-finger protein SEA-2 regulates larval developmental timing and adult lifespan in C. elegans.</title>
        <authorList>
            <person name="Huang X."/>
            <person name="Zhang H."/>
            <person name="Zhang H."/>
        </authorList>
    </citation>
    <scope>FUNCTION</scope>
    <scope>MUTAGENESIS OF PRO-1465</scope>
</reference>
<reference key="14">
    <citation type="journal article" date="2012" name="Cell Metab.">
        <title>TOR signaling and rapamycin influence longevity by regulating SKN-1/Nrf and DAF-16/FoxO.</title>
        <authorList>
            <person name="Robida-Stubbs S."/>
            <person name="Glover-Cutter K."/>
            <person name="Lamming D.W."/>
            <person name="Mizunuma M."/>
            <person name="Narasimhan S.D."/>
            <person name="Neumann-Haefelin E."/>
            <person name="Sabatini D.M."/>
            <person name="Blackwell T.K."/>
        </authorList>
    </citation>
    <scope>FUNCTION</scope>
    <scope>DISRUPTION PHENOTYPE</scope>
</reference>
<reference key="15">
    <citation type="journal article" date="2012" name="Development">
        <title>S6K links cell fate, cell cycle and nutrient response in C. elegans germline stem/progenitor cells.</title>
        <authorList>
            <person name="Korta D.Z."/>
            <person name="Tuck S."/>
            <person name="Hubbard E.J."/>
        </authorList>
    </citation>
    <scope>FUNCTION</scope>
    <scope>MUTAGENESIS OF PRO-1465</scope>
</reference>
<reference key="16">
    <citation type="journal article" date="2012" name="PLoS Genet.">
        <title>Cell-nonautonomous signaling of FOXO/DAF-16 to the stem cells of Caenorhabditis elegans.</title>
        <authorList>
            <person name="Qi W."/>
            <person name="Huang X."/>
            <person name="Neumann-Haefelin E."/>
            <person name="Schulze E."/>
            <person name="Baumeister R."/>
        </authorList>
    </citation>
    <scope>FUNCTION</scope>
    <scope>MUTAGENESIS OF PRO-1465</scope>
</reference>
<reference key="17">
    <citation type="journal article" date="2013" name="Cell Rep.">
        <title>Germline signaling mediates the synergistically prolonged longevity produced by double mutations in daf-2 and rsks-1 in C. elegans.</title>
        <authorList>
            <person name="Chen D."/>
            <person name="Li P.W."/>
            <person name="Goldstein B.A."/>
            <person name="Cai W."/>
            <person name="Thomas E.L."/>
            <person name="Chen F."/>
            <person name="Hubbard A.E."/>
            <person name="Melov S."/>
            <person name="Kapahi P."/>
        </authorList>
    </citation>
    <scope>FUNCTION</scope>
    <scope>DISRUPTION PHENOTYPE</scope>
    <scope>MUTAGENESIS OF PRO-1434 AND PRO-1465</scope>
</reference>
<reference key="18">
    <citation type="journal article" date="2013" name="PLoS Genet.">
        <title>TATN-1 mutations reveal a novel role for tyrosine as a metabolic signal that influences developmental decisions and longevity in Caenorhabditis elegans.</title>
        <authorList>
            <person name="Ferguson A.A."/>
            <person name="Roy S."/>
            <person name="Kormanik K.N."/>
            <person name="Kim Y."/>
            <person name="Dumas K.J."/>
            <person name="Ritov V.B."/>
            <person name="Matern D."/>
            <person name="Hu P.J."/>
            <person name="Fisher A.L."/>
        </authorList>
    </citation>
    <scope>FUNCTION</scope>
    <scope>DISRUPTION PHENOTYPE</scope>
    <scope>MUTAGENESIS OF SER-573</scope>
</reference>
<reference key="19">
    <citation type="journal article" date="2014" name="Oncogene">
        <title>Insulin activates the insulin receptor to downregulate the PTEN tumour suppressor.</title>
        <authorList>
            <person name="Liu J."/>
            <person name="Visser-Grieve S."/>
            <person name="Boudreau J."/>
            <person name="Yeung B."/>
            <person name="Lo S."/>
            <person name="Chamberlain G."/>
            <person name="Yu F."/>
            <person name="Sun T."/>
            <person name="Papanicolaou T."/>
            <person name="Lam A."/>
            <person name="Yang X."/>
            <person name="Chin-Sang I."/>
        </authorList>
    </citation>
    <scope>FUNCTION</scope>
    <scope>INTERACTION WITH DAF-18</scope>
    <scope>MUTAGENESIS OF PRO-1465</scope>
</reference>
<reference key="20">
    <citation type="journal article" date="2014" name="Science">
        <title>Role of synaptic phosphatidylinositol 3-kinase in a behavioral learning response in C. elegans.</title>
        <authorList>
            <person name="Ohno H."/>
            <person name="Kato S."/>
            <person name="Naito Y."/>
            <person name="Kunitomo H."/>
            <person name="Tomioka M."/>
            <person name="Iino Y."/>
        </authorList>
    </citation>
    <scope>FUNCTION (ISOFORMS A AND C)</scope>
    <scope>SUBCELLULAR LOCATION (ISOFORM C)</scope>
    <scope>INTERACTION WITH CASY-1 (ISOFORM C)</scope>
</reference>
<reference key="21">
    <citation type="journal article" date="2015" name="Development">
        <title>DAF-18/PTEN locally antagonizes insulin signalling to couple germline stem cell proliferation to oocyte needs in C. elegans.</title>
        <authorList>
            <person name="Narbonne P."/>
            <person name="Maddox P.S."/>
            <person name="Labbe J.C."/>
        </authorList>
    </citation>
    <scope>MUTAGENESIS OF PRO-1465</scope>
</reference>
<reference key="22">
    <citation type="journal article" date="2016" name="Nat. Commun.">
        <title>Small nucleoli are a cellular hallmark of longevity.</title>
        <authorList>
            <person name="Tiku V."/>
            <person name="Jain C."/>
            <person name="Raz Y."/>
            <person name="Nakamura S."/>
            <person name="Heestand B."/>
            <person name="Liu W."/>
            <person name="Spaeth M."/>
            <person name="Suchiman H.E.D."/>
            <person name="Mueller R.U."/>
            <person name="Slagboom P.E."/>
            <person name="Partridge L."/>
            <person name="Antebi A."/>
        </authorList>
    </citation>
    <scope>FUNCTION</scope>
    <scope>DISRUPTION PHENOTYPE</scope>
    <scope>MUTAGENESIS OF PRO-1465</scope>
</reference>
<reference key="23">
    <citation type="journal article" date="2018" name="Nat. Commun.">
        <title>Visible light reduces C. elegans longevity.</title>
        <authorList>
            <person name="De Magalhaes Filho C.D."/>
            <person name="Henriquez B."/>
            <person name="Seah N.E."/>
            <person name="Evans R.M."/>
            <person name="Lapierre L.R."/>
            <person name="Dillin A."/>
        </authorList>
    </citation>
    <scope>FUNCTION</scope>
    <scope>MUTAGENESIS OF PRO-1465</scope>
</reference>
<protein>
    <recommendedName>
        <fullName evidence="1">Insulin-like receptor</fullName>
        <shortName evidence="1">IR</shortName>
        <ecNumber>2.7.10.1</ecNumber>
    </recommendedName>
    <alternativeName>
        <fullName evidence="30">Abnormal dauer formation protein 2</fullName>
    </alternativeName>
    <component>
        <recommendedName>
            <fullName evidence="1">Insulin-like receptor subunit alpha</fullName>
        </recommendedName>
    </component>
    <component>
        <recommendedName>
            <fullName evidence="1">Insulin-like receptor subunit beta</fullName>
        </recommendedName>
    </component>
</protein>
<name>INSR_CAEEL</name>
<accession>Q968Y9</accession>
<accession>A0A0K3AUY1</accession>
<accession>B5QS63</accession>
<accession>O16131</accession>
<sequence length="1846" mass="207124">MTRMNIVRCRRRHKILENLEEENLGPSCSSTTSTTAATEALGTTTEDMRLKQQRSSSRATEHDIVDGNHHDDEHITMRRLRLVKNSRTRRRTTPDSSMDCYEENPPSQKTSINYSWISKKSSMTSLMLLLLFAFVQPCASIVEKRCGPIDIRNRPWDIKPQWSKLGDPNEKDLAGQRMVNCTVVEGSLTISFVLKHKTKAQEEMHRSLQPRYSQDEFITFPHLREITGTLLVFETEGLVDLRKIFPNLRVIGGRSLIQHYALIIYRNPDLEIGLDKLSVIRNGGVRIIDNRKLCYTKTIDWKHLITSSINDVVVDNAAEYAVTETGLMCPRGACEEDKGESKCHYLEEKNQEQGVERVQSCWSNTTCQKSCAYDRLLPTKEIGPGCDANGDRCHDQCVGGCERVNDATACHACKNVYHKGKCIEKCDAHLYLLLQRRCVTREQCLQLNPVLSNKTVPIKATAGLCSDKCPDGYQINPDDHRECRKCVGKCEIVCEINHVIDTFPKAQAIRLCNIIDGNLTIEIRGKQDSGMASELKDIFANIHTITGYLLVRQSSPFISLNMFRNLRRIEAKSLFRNLYAITVFENPNLKKLFDSTTDLTLDRGTVSIANNKMLCFKYIKQLMSKLNIPLDPIDQSEGTNGEKAICEDMAINVSITAVNADSVFFSWPSFNITDIDQRKFLGYELFFKEVPRIDENMTIEEDRSACVDSWQSVFKQYYETSNGEPTPDIFMDIGPRERIRPNTLYAYYVATQMVLHAGAKNGVSKIGFVRTSYYTPDPPTLALAQVDSDAIHITWEAPLQPNGDLTHYTIMWRENEVSPYEEAEKFCTDASTPANRQHTKDPKETIVADKPVDIPSSRTVAPTLLTMMGHEDQQKTCAATPGCCSCSAIEESSEQNKKKRPDPMSAIESSAFENKLLDEVLMPRDTMRVRRSIEDANRVSEELEKAENLGKAPKTLGGKKPLIHISKKKPSSSSTTSTPAPTIASMYALTRKPTTVPGTRIRLYEIYEPLPGSWAINVSALALDNSYVIRNLKHYTLYAISLSACQNMTVPGASCSISHRAGALKRTKHITDIDKVLNETIEWRFMNNSQQVNVTWDPPTEVNGGIFGYVVKLKSKVDGSIVMTRCVGAKRGYSTRNQGVLFQNLADGRYFVSVTATSVHGAGPEAESSDPIVVMTPGFFTVEIILGMLLVFLILMSIAGCIIYYYIQVRYGKKVKALSDFMQLNPEYCVDNKYNADDWELRQDDVVLGQQCGEGSFGKVYLGTGNNVVSLMGDRFGPCAIKINVDDPASTENLNYLMEANIMKNFKTNFIVKLYGVISTVQPAMVVMEMMDLGNLRDYLRSKREDEVFNETDCNFFDIIPRDKFHEWAAQICDGMAYLESLKFCHRDLAARNCMINRDETVKIGDFGMARDLFYHDYYKPSGKRMMPVRWMSPESLKDGKFDSKSDVWSFGVVLYEMVTLGAQPYIGLSNDEVLNYIGMARKVIKKPECCENYWYKVMKMCWRYSPRDRPTFLQLVHLLAAEASPEFRDLSFVLTDNQMILDDSEALDLDDIDDTDMNDQVVEVAPDVENVEVQSDSERRNTDSIPLKQFKTIPPINATTSHSTISIDETPMKAKQREGSLDEEYALMNHSGGPSDAEVRTYAGDGDYVERDVRENDVPTRRNTGASTSSYTGGGPYCLTNRGGSNERGAGFGEAVRLTDGVGSGHLNDDDYVEKEISSMDTRRSTGASSSSYGVPQTNWSGNRGATYYTSKAQQAATAAAAAAAALQQQQNGGRGDRLTQLPGTGHLQSTRGGQDGDYIETEPKNYRNNGSPSRNGNSRDIFNGRSAFGENEHLIEDNEHHPLV</sequence>
<organism>
    <name type="scientific">Caenorhabditis elegans</name>
    <dbReference type="NCBI Taxonomy" id="6239"/>
    <lineage>
        <taxon>Eukaryota</taxon>
        <taxon>Metazoa</taxon>
        <taxon>Ecdysozoa</taxon>
        <taxon>Nematoda</taxon>
        <taxon>Chromadorea</taxon>
        <taxon>Rhabditida</taxon>
        <taxon>Rhabditina</taxon>
        <taxon>Rhabditomorpha</taxon>
        <taxon>Rhabditoidea</taxon>
        <taxon>Rhabditidae</taxon>
        <taxon>Peloderinae</taxon>
        <taxon>Caenorhabditis</taxon>
    </lineage>
</organism>
<gene>
    <name evidence="33" type="primary">daf-2</name>
    <name evidence="33" type="ORF">Y55D5A.5</name>
</gene>
<feature type="signal peptide" evidence="3">
    <location>
        <begin position="1"/>
        <end status="unknown"/>
    </location>
</feature>
<feature type="chain" id="PRO_0000386619" description="Insulin-like receptor subunit alpha" evidence="3">
    <location>
        <begin status="unknown"/>
        <end position="966"/>
    </location>
</feature>
<feature type="chain" id="PRO_0000386620" description="Insulin-like receptor subunit beta" evidence="3">
    <location>
        <begin position="970"/>
        <end position="1846"/>
    </location>
</feature>
<feature type="topological domain" description="Extracellular" evidence="3">
    <location>
        <begin position="970"/>
        <end position="1183"/>
    </location>
</feature>
<feature type="transmembrane region" description="Helical" evidence="3">
    <location>
        <begin position="1184"/>
        <end position="1204"/>
    </location>
</feature>
<feature type="topological domain" description="Cytoplasmic" evidence="3">
    <location>
        <begin position="1205"/>
        <end position="1846"/>
    </location>
</feature>
<feature type="domain" description="Fibronectin type-III 1" evidence="5">
    <location>
        <begin position="775"/>
        <end position="869"/>
    </location>
</feature>
<feature type="domain" description="Fibronectin type-III 2" evidence="5">
    <location>
        <begin position="969"/>
        <end position="1067"/>
    </location>
</feature>
<feature type="domain" description="Fibronectin type-III 3" evidence="5">
    <location>
        <begin position="1077"/>
        <end position="1179"/>
    </location>
</feature>
<feature type="domain" description="Protein kinase" evidence="4">
    <location>
        <begin position="1246"/>
        <end position="1528"/>
    </location>
</feature>
<feature type="region of interest" description="Disordered" evidence="7">
    <location>
        <begin position="944"/>
        <end position="980"/>
    </location>
</feature>
<feature type="region of interest" description="Disordered" evidence="7">
    <location>
        <begin position="1718"/>
        <end position="1742"/>
    </location>
</feature>
<feature type="region of interest" description="Disordered" evidence="7">
    <location>
        <begin position="1769"/>
        <end position="1826"/>
    </location>
</feature>
<feature type="compositionally biased region" description="Basic residues" evidence="7">
    <location>
        <begin position="961"/>
        <end position="970"/>
    </location>
</feature>
<feature type="compositionally biased region" description="Low complexity" evidence="7">
    <location>
        <begin position="971"/>
        <end position="980"/>
    </location>
</feature>
<feature type="compositionally biased region" description="Polar residues" evidence="7">
    <location>
        <begin position="1726"/>
        <end position="1742"/>
    </location>
</feature>
<feature type="compositionally biased region" description="Low complexity" evidence="7">
    <location>
        <begin position="1808"/>
        <end position="1821"/>
    </location>
</feature>
<feature type="active site" description="Proton acceptor" evidence="2 4 6">
    <location>
        <position position="1388"/>
    </location>
</feature>
<feature type="binding site" evidence="2 4">
    <location>
        <begin position="1252"/>
        <end position="1260"/>
    </location>
    <ligand>
        <name>ATP</name>
        <dbReference type="ChEBI" id="CHEBI:30616"/>
    </ligand>
</feature>
<feature type="binding site" evidence="2 4">
    <location>
        <position position="1282"/>
    </location>
    <ligand>
        <name>ATP</name>
        <dbReference type="ChEBI" id="CHEBI:30616"/>
    </ligand>
</feature>
<feature type="glycosylation site" description="N-linked (GlcNAc...) asparagine" evidence="3">
    <location>
        <position position="113"/>
    </location>
</feature>
<feature type="glycosylation site" description="N-linked (GlcNAc...) asparagine" evidence="3">
    <location>
        <position position="180"/>
    </location>
</feature>
<feature type="glycosylation site" description="N-linked (GlcNAc...) asparagine" evidence="11">
    <location>
        <position position="364"/>
    </location>
</feature>
<feature type="glycosylation site" description="N-linked (GlcNAc...) asparagine" evidence="11">
    <location>
        <position position="453"/>
    </location>
</feature>
<feature type="glycosylation site" description="N-linked (GlcNAc...) asparagine" evidence="3">
    <location>
        <position position="518"/>
    </location>
</feature>
<feature type="glycosylation site" description="N-linked (GlcNAc...) asparagine" evidence="3">
    <location>
        <position position="652"/>
    </location>
</feature>
<feature type="glycosylation site" description="N-linked (GlcNAc...) asparagine" evidence="3">
    <location>
        <position position="671"/>
    </location>
</feature>
<feature type="glycosylation site" description="N-linked (GlcNAc...) asparagine" evidence="11">
    <location>
        <position position="696"/>
    </location>
</feature>
<feature type="glycosylation site" description="N-linked (GlcNAc...) asparagine" evidence="11">
    <location>
        <position position="1017"/>
    </location>
</feature>
<feature type="glycosylation site" description="N-linked (GlcNAc...) asparagine" evidence="3">
    <location>
        <position position="1047"/>
    </location>
</feature>
<feature type="glycosylation site" description="N-linked (GlcNAc...) asparagine" evidence="11">
    <location>
        <position position="1078"/>
    </location>
</feature>
<feature type="glycosylation site" description="N-linked (GlcNAc...) asparagine" evidence="3">
    <location>
        <position position="1087"/>
    </location>
</feature>
<feature type="glycosylation site" description="N-linked (GlcNAc...) asparagine" evidence="3">
    <location>
        <position position="1093"/>
    </location>
</feature>
<feature type="disulfide bond" evidence="1">
    <location>
        <begin position="371"/>
        <end position="386"/>
    </location>
</feature>
<feature type="disulfide bond" evidence="1">
    <location>
        <begin position="393"/>
        <end position="401"/>
    </location>
</feature>
<feature type="disulfide bond" evidence="1">
    <location>
        <begin position="397"/>
        <end position="410"/>
    </location>
</feature>
<feature type="disulfide bond" evidence="1">
    <location>
        <begin position="413"/>
        <end position="422"/>
    </location>
</feature>
<feature type="disulfide bond" evidence="1">
    <location>
        <begin position="426"/>
        <end position="438"/>
    </location>
</feature>
<feature type="disulfide bond" evidence="1">
    <location>
        <begin position="469"/>
        <end position="483"/>
    </location>
</feature>
<feature type="disulfide bond" evidence="1">
    <location>
        <begin position="486"/>
        <end position="490"/>
    </location>
</feature>
<feature type="disulfide bond" evidence="1">
    <location>
        <begin position="615"/>
        <end position="646"/>
    </location>
</feature>
<feature type="disulfide bond" description="Interchain" evidence="1">
    <location>
        <position position="706"/>
    </location>
</feature>
<feature type="splice variant" id="VSP_061883" description="In isoform c.">
    <original>R</original>
    <variation>RCDIKNDPVGCAMLLLPPEIDDSDVGDDDEEPGGGSEQQQRILRNSEILKRQKRQILGRSLGGIHGIRSIGRKEYEQFADMIL</variation>
    <location>
        <position position="924"/>
    </location>
</feature>
<feature type="mutagenesis site" description="Embronically lethal." evidence="12">
    <original>C</original>
    <variation>Y</variation>
    <location>
        <position position="146"/>
    </location>
</feature>
<feature type="mutagenesis site" description="In m41; temperature-sensitive. No visible change in dauer formation and adult lifepspan at 15 degrees Celsius, but undergoes dauer formation at 25 degrees Celsius and has increased lifespan. Slight decrease in NaCl avoidance behavior after exposure to NaCl under starvation conditions. Normal number of muscle membrane extensions." evidence="9 10 13">
    <original>G</original>
    <variation>E</variation>
    <location>
        <position position="383"/>
    </location>
</feature>
<feature type="mutagenesis site" description="Dauer formation; when associated with L-470." evidence="28">
    <original>C</original>
    <variation>Y</variation>
    <location>
        <position position="401"/>
    </location>
</feature>
<feature type="mutagenesis site" description="Dauer formation above 20 degrees Celsius." evidence="28">
    <original>C</original>
    <variation>S</variation>
    <location>
        <position position="469"/>
    </location>
</feature>
<feature type="mutagenesis site" description="Dauer formation; when associated with Y-401." evidence="28">
    <original>P</original>
    <variation>L</variation>
    <location>
        <position position="470"/>
    </location>
</feature>
<feature type="mutagenesis site" description="In m596; increases the number of muscle membrane extensions during larval development." evidence="13">
    <original>G</original>
    <variation>S</variation>
    <location>
        <position position="547"/>
    </location>
</feature>
<feature type="mutagenesis site" description="In e1368; dauer formation above 25 degrees Celsius. Enhances dauer formation in a tatn-1 RNAi mutant background." evidence="23 28">
    <original>S</original>
    <variation>L</variation>
    <location>
        <position position="573"/>
    </location>
</feature>
<feature type="mutagenesis site" description="Dauer formation above 26 degrees Celsius." evidence="8">
    <original>A</original>
    <variation>T</variation>
    <location>
        <position position="580"/>
    </location>
</feature>
<feature type="mutagenesis site" description="Dauer formation above 25 degrees Celsius." evidence="28">
    <original>D</original>
    <variation>N</variation>
    <location>
        <position position="648"/>
    </location>
</feature>
<feature type="mutagenesis site" description="In m577; normal number of muscle membrane extensions." evidence="13">
    <original>C</original>
    <variation>Y</variation>
    <location>
        <position position="1045"/>
    </location>
</feature>
<feature type="mutagenesis site" description="In sa219; dauer formation above 20 degrees Celsius. Normal NaCl avoidance behavior after exposure to NaCl under starvation conditions." evidence="10 28">
    <original>D</original>
    <variation>N</variation>
    <location>
        <position position="1374"/>
    </location>
</feature>
<feature type="mutagenesis site" description="In e1391; dauer formation above 20 degrees Celsius and increased lifespan. Increases the number of muscle membrane extensions during larval development." evidence="13 22 28">
    <original>P</original>
    <variation>L</variation>
    <location>
        <position position="1434"/>
    </location>
</feature>
<feature type="mutagenesis site" description="In e1370; extended lifespan. Accumulates fat and undergoes dauer formation with a developmentally arrested germline at 25 degrees Celsius and above. Pigmented intestine and increased resistance to bacterial pathogens, UV, high temperature and paraquat treatment. At 22 degrees Celsius, under constant darkness conditions only 41% of animals enter the dauer diapause phase, while under constant white light exposure, 100% of animals enter the dauer diapause phase and lifepan increases. Under standard day light conditions 87% of animals lived longer as compared to wild-type. Reduced number of germline progenitors during larval development and proliferation of germline stem cells. Fails to avoid NaCl after exposure to NaCl under starvation conditions. Increases the number of muscle membrane extensions during larval development. Overextension of PML neuron axons. Reduces nucleoli size in hypodermal and pharyngeal muscle cells. Enhances the defective seam cell development and delayed terminal differentiation phenotype of the sea-2 bp283 mutant." evidence="8 10 12 13 14 16 17 18 20 21 22 25 26 27 28 29">
    <original>P</original>
    <variation>S</variation>
    <location>
        <position position="1465"/>
    </location>
</feature>
<feature type="sequence conflict" description="In Ref. 1; AAC47715." evidence="31" ref="1">
    <original>H</original>
    <variation>R</variation>
    <location>
        <position position="838"/>
    </location>
</feature>
<feature type="sequence conflict" description="In Ref. 1; AAC47715." evidence="31" ref="1">
    <original>K</original>
    <variation>Q</variation>
    <location>
        <position position="1313"/>
    </location>
</feature>
<evidence type="ECO:0000250" key="1">
    <source>
        <dbReference type="UniProtKB" id="P06213"/>
    </source>
</evidence>
<evidence type="ECO:0000250" key="2">
    <source>
        <dbReference type="UniProtKB" id="P28523"/>
    </source>
</evidence>
<evidence type="ECO:0000255" key="3"/>
<evidence type="ECO:0000255" key="4">
    <source>
        <dbReference type="PROSITE-ProRule" id="PRU00159"/>
    </source>
</evidence>
<evidence type="ECO:0000255" key="5">
    <source>
        <dbReference type="PROSITE-ProRule" id="PRU00316"/>
    </source>
</evidence>
<evidence type="ECO:0000255" key="6">
    <source>
        <dbReference type="PROSITE-ProRule" id="PRU10028"/>
    </source>
</evidence>
<evidence type="ECO:0000256" key="7">
    <source>
        <dbReference type="SAM" id="MobiDB-lite"/>
    </source>
</evidence>
<evidence type="ECO:0000269" key="8">
    <source>
    </source>
</evidence>
<evidence type="ECO:0000269" key="9">
    <source>
    </source>
</evidence>
<evidence type="ECO:0000269" key="10">
    <source>
    </source>
</evidence>
<evidence type="ECO:0000269" key="11">
    <source>
    </source>
</evidence>
<evidence type="ECO:0000269" key="12">
    <source>
    </source>
</evidence>
<evidence type="ECO:0000269" key="13">
    <source>
    </source>
</evidence>
<evidence type="ECO:0000269" key="14">
    <source>
    </source>
</evidence>
<evidence type="ECO:0000269" key="15">
    <source>
    </source>
</evidence>
<evidence type="ECO:0000269" key="16">
    <source>
    </source>
</evidence>
<evidence type="ECO:0000269" key="17">
    <source>
    </source>
</evidence>
<evidence type="ECO:0000269" key="18">
    <source>
    </source>
</evidence>
<evidence type="ECO:0000269" key="19">
    <source>
    </source>
</evidence>
<evidence type="ECO:0000269" key="20">
    <source>
    </source>
</evidence>
<evidence type="ECO:0000269" key="21">
    <source>
    </source>
</evidence>
<evidence type="ECO:0000269" key="22">
    <source>
    </source>
</evidence>
<evidence type="ECO:0000269" key="23">
    <source>
    </source>
</evidence>
<evidence type="ECO:0000269" key="24">
    <source>
    </source>
</evidence>
<evidence type="ECO:0000269" key="25">
    <source>
    </source>
</evidence>
<evidence type="ECO:0000269" key="26">
    <source>
    </source>
</evidence>
<evidence type="ECO:0000269" key="27">
    <source>
    </source>
</evidence>
<evidence type="ECO:0000269" key="28">
    <source>
    </source>
</evidence>
<evidence type="ECO:0000269" key="29">
    <source>
    </source>
</evidence>
<evidence type="ECO:0000303" key="30">
    <source>
    </source>
</evidence>
<evidence type="ECO:0000305" key="31"/>
<evidence type="ECO:0000312" key="32">
    <source>
        <dbReference type="EMBL" id="AAC47715.1"/>
    </source>
</evidence>
<evidence type="ECO:0000312" key="33">
    <source>
        <dbReference type="WormBase" id="Y55D5A.5a"/>
    </source>
</evidence>
<comment type="function">
    <text evidence="8 9 14 16 17 18 19 20 21 22 23 27 28 29">Insulin receptor-like tyrosine kinase which regulates metabolism, controls longevity and prevents developmental arrest at the dauer stage (PubMed:11743719, PubMed:21334311, PubMed:22916022, PubMed:24332851, PubMed:24385923, PubMed:28853436, PubMed:29500338, PubMed:9252323, PubMed:9790527). Binding of INS family members may either stimulate, or antagonize, association of the receptor with downstream mediators such as pdk-1 and age-1 (PubMed:11274053). Required for germline progenitor proliferation during larval development (PubMed:22278922). Plays a role in maintaining gonad integrity in a daf-16/FOXO-dependent manner (PubMed:22916022). Required for the response to environmental stimuli such as light, food, pheromone, and temperature (PubMed:24332851, PubMed:29500338). Negatively regulates resistance to UV and oxidative stress (PubMed:24332851). In a daf-16/FOXO-dependent manner, plays a role in regulating the response to white light (PubMed:29500338). Role in immune function and pathogen resistance (PubMed:18782349). Negatively regulates autophagy (PubMed:22560223). Regulates daf-18/PTEN protein levels (PubMed:23995781). Plays a role in controlling seam cell development during the larval stages (PubMed:21471153).</text>
</comment>
<comment type="function">
    <molecule>Isoform a</molecule>
    <text evidence="24">Required for taste avoidance learning in the cell body of ASER gustatory neurons.</text>
</comment>
<comment type="function">
    <molecule>Isoform c</molecule>
    <text evidence="24">Required for taste avoidance learning in axons of ASER gustatory neurons.</text>
</comment>
<comment type="catalytic activity">
    <reaction evidence="1 6">
        <text>L-tyrosyl-[protein] + ATP = O-phospho-L-tyrosyl-[protein] + ADP + H(+)</text>
        <dbReference type="Rhea" id="RHEA:10596"/>
        <dbReference type="Rhea" id="RHEA-COMP:10136"/>
        <dbReference type="Rhea" id="RHEA-COMP:20101"/>
        <dbReference type="ChEBI" id="CHEBI:15378"/>
        <dbReference type="ChEBI" id="CHEBI:30616"/>
        <dbReference type="ChEBI" id="CHEBI:46858"/>
        <dbReference type="ChEBI" id="CHEBI:61978"/>
        <dbReference type="ChEBI" id="CHEBI:456216"/>
        <dbReference type="EC" id="2.7.10.1"/>
    </reaction>
</comment>
<comment type="cofactor">
    <cofactor evidence="31">
        <name>Mg(2+)</name>
        <dbReference type="ChEBI" id="CHEBI:18420"/>
    </cofactor>
</comment>
<comment type="activity regulation">
    <text evidence="1 15">Autophosphorylation activates the kinase activity (By similarity). Interaction with shc-1 may inhibit its activity (PubMed:18832074).</text>
</comment>
<comment type="subunit">
    <text evidence="1 15 21">Tetramer of 2 alpha and 2 beta chains linked by disulfide bonds. The alpha chains contribute to the formation of the ligand-binding domain, while the beta chains carry the kinase domain (By similarity). Interacts (via cytoplasmic domain) with shc-1 (PID domain) (PubMed:18832074). Interacts (via kinase domain) with daf-18 (via C-terminus) (PubMed:23995781).</text>
</comment>
<comment type="subunit">
    <molecule>Isoform c</molecule>
    <text evidence="24">Interacts with casy-1; promoting axonal localization.</text>
</comment>
<comment type="subcellular location">
    <subcellularLocation>
        <location evidence="1">Membrane</location>
        <topology evidence="1">Single-pass type I membrane protein</topology>
    </subcellularLocation>
</comment>
<comment type="subcellular location">
    <molecule>Isoform c</molecule>
    <subcellularLocation>
        <location evidence="24">Cell projection</location>
        <location evidence="24">Axon</location>
    </subcellularLocation>
    <text evidence="24">Localizes to the synapse-rich neurite that extends axons. Casy-1 is required for axonal localization.</text>
</comment>
<comment type="alternative products">
    <event type="alternative splicing"/>
    <isoform>
        <id>Q968Y9-1</id>
        <name>a</name>
        <sequence type="displayed"/>
    </isoform>
    <isoform>
        <id>Q968Y9-3</id>
        <name>c</name>
        <sequence type="described" ref="VSP_061883"/>
    </isoform>
</comment>
<comment type="disruption phenotype">
    <text evidence="8 12 13 14 19 22 23 26 28 29">Accumulation of fat, pigmented intestine, increased lifespan, increased dauer formation and increased resistance to pathogens. Severe loss of function mutants display recessive early embryonic lethality (PubMed:11274053, PubMed:18245374, PubMed:18782349, PubMed:9252323, PubMed:9790527). RNAi-mediated knockdown in germline, hypodermis, intestine or in muscles causes increased lifespan (PubMed:24332851, PubMed:28853436). RNAi-mediated knockdown in a ncl-1 mutant (e1942) background reduces the increased longevity of the daf-2 single mutant, and reduces the increased ribosomal protein synthesis in the ncl-1 single mutant (e1942) (PubMed:28853436). RNAi-mediated knockdown in adults causes an increase in lgg-1 positive autophagic vesicles (PubMed:22560223). RNAi-mediated knockdown results in an increase in the number of muscle arm extensions (PubMed:18436204). RNAi-mediated knockdown together with tatn-1 RNAi extends the lifespan of the single daf-2 RNAi mutant (PubMed:24385923).</text>
</comment>
<comment type="similarity">
    <text evidence="4">Belongs to the protein kinase superfamily. Tyr protein kinase family. Insulin receptor subfamily.</text>
</comment>